<comment type="function">
    <text evidence="1">Catalyzes the phosphorylation of the hydroxyl group of 4-methyl-5-beta-hydroxyethylthiazole (THZ).</text>
</comment>
<comment type="catalytic activity">
    <reaction evidence="1">
        <text>5-(2-hydroxyethyl)-4-methylthiazole + ATP = 4-methyl-5-(2-phosphooxyethyl)-thiazole + ADP + H(+)</text>
        <dbReference type="Rhea" id="RHEA:24212"/>
        <dbReference type="ChEBI" id="CHEBI:15378"/>
        <dbReference type="ChEBI" id="CHEBI:17957"/>
        <dbReference type="ChEBI" id="CHEBI:30616"/>
        <dbReference type="ChEBI" id="CHEBI:58296"/>
        <dbReference type="ChEBI" id="CHEBI:456216"/>
        <dbReference type="EC" id="2.7.1.50"/>
    </reaction>
</comment>
<comment type="cofactor">
    <cofactor evidence="1">
        <name>Mg(2+)</name>
        <dbReference type="ChEBI" id="CHEBI:18420"/>
    </cofactor>
</comment>
<comment type="pathway">
    <text evidence="1">Cofactor biosynthesis; thiamine diphosphate biosynthesis; 4-methyl-5-(2-phosphoethyl)-thiazole from 5-(2-hydroxyethyl)-4-methylthiazole: step 1/1.</text>
</comment>
<comment type="similarity">
    <text evidence="1">Belongs to the Thz kinase family.</text>
</comment>
<evidence type="ECO:0000255" key="1">
    <source>
        <dbReference type="HAMAP-Rule" id="MF_00228"/>
    </source>
</evidence>
<name>THIM_CERS5</name>
<feature type="chain" id="PRO_0000336565" description="Hydroxyethylthiazole kinase">
    <location>
        <begin position="1"/>
        <end position="262"/>
    </location>
</feature>
<feature type="binding site" evidence="1">
    <location>
        <position position="43"/>
    </location>
    <ligand>
        <name>substrate</name>
    </ligand>
</feature>
<feature type="binding site" evidence="1">
    <location>
        <position position="118"/>
    </location>
    <ligand>
        <name>ATP</name>
        <dbReference type="ChEBI" id="CHEBI:30616"/>
    </ligand>
</feature>
<feature type="binding site" evidence="1">
    <location>
        <position position="164"/>
    </location>
    <ligand>
        <name>ATP</name>
        <dbReference type="ChEBI" id="CHEBI:30616"/>
    </ligand>
</feature>
<feature type="binding site" evidence="1">
    <location>
        <position position="191"/>
    </location>
    <ligand>
        <name>substrate</name>
    </ligand>
</feature>
<dbReference type="EC" id="2.7.1.50" evidence="1"/>
<dbReference type="EMBL" id="CP000661">
    <property type="protein sequence ID" value="ABP69489.1"/>
    <property type="molecule type" value="Genomic_DNA"/>
</dbReference>
<dbReference type="SMR" id="A4WQ25"/>
<dbReference type="STRING" id="349102.Rsph17025_0583"/>
<dbReference type="KEGG" id="rsq:Rsph17025_0583"/>
<dbReference type="eggNOG" id="COG2145">
    <property type="taxonomic scope" value="Bacteria"/>
</dbReference>
<dbReference type="HOGENOM" id="CLU_019943_0_1_5"/>
<dbReference type="BioCyc" id="RSPH349102:G1G8M-600-MONOMER"/>
<dbReference type="UniPathway" id="UPA00060">
    <property type="reaction ID" value="UER00139"/>
</dbReference>
<dbReference type="GO" id="GO:0005524">
    <property type="term" value="F:ATP binding"/>
    <property type="evidence" value="ECO:0007669"/>
    <property type="project" value="UniProtKB-UniRule"/>
</dbReference>
<dbReference type="GO" id="GO:0004417">
    <property type="term" value="F:hydroxyethylthiazole kinase activity"/>
    <property type="evidence" value="ECO:0007669"/>
    <property type="project" value="UniProtKB-UniRule"/>
</dbReference>
<dbReference type="GO" id="GO:0000287">
    <property type="term" value="F:magnesium ion binding"/>
    <property type="evidence" value="ECO:0007669"/>
    <property type="project" value="UniProtKB-UniRule"/>
</dbReference>
<dbReference type="GO" id="GO:0009228">
    <property type="term" value="P:thiamine biosynthetic process"/>
    <property type="evidence" value="ECO:0007669"/>
    <property type="project" value="UniProtKB-KW"/>
</dbReference>
<dbReference type="GO" id="GO:0009229">
    <property type="term" value="P:thiamine diphosphate biosynthetic process"/>
    <property type="evidence" value="ECO:0007669"/>
    <property type="project" value="UniProtKB-UniRule"/>
</dbReference>
<dbReference type="CDD" id="cd01170">
    <property type="entry name" value="THZ_kinase"/>
    <property type="match status" value="1"/>
</dbReference>
<dbReference type="Gene3D" id="3.40.1190.20">
    <property type="match status" value="1"/>
</dbReference>
<dbReference type="HAMAP" id="MF_00228">
    <property type="entry name" value="Thz_kinase"/>
    <property type="match status" value="1"/>
</dbReference>
<dbReference type="InterPro" id="IPR000417">
    <property type="entry name" value="Hyethyz_kinase"/>
</dbReference>
<dbReference type="InterPro" id="IPR029056">
    <property type="entry name" value="Ribokinase-like"/>
</dbReference>
<dbReference type="NCBIfam" id="NF006830">
    <property type="entry name" value="PRK09355.1"/>
    <property type="match status" value="1"/>
</dbReference>
<dbReference type="Pfam" id="PF02110">
    <property type="entry name" value="HK"/>
    <property type="match status" value="1"/>
</dbReference>
<dbReference type="PIRSF" id="PIRSF000513">
    <property type="entry name" value="Thz_kinase"/>
    <property type="match status" value="1"/>
</dbReference>
<dbReference type="PRINTS" id="PR01099">
    <property type="entry name" value="HYETHTZKNASE"/>
</dbReference>
<dbReference type="SUPFAM" id="SSF53613">
    <property type="entry name" value="Ribokinase-like"/>
    <property type="match status" value="1"/>
</dbReference>
<keyword id="KW-0067">ATP-binding</keyword>
<keyword id="KW-0418">Kinase</keyword>
<keyword id="KW-0460">Magnesium</keyword>
<keyword id="KW-0479">Metal-binding</keyword>
<keyword id="KW-0547">Nucleotide-binding</keyword>
<keyword id="KW-0784">Thiamine biosynthesis</keyword>
<keyword id="KW-0808">Transferase</keyword>
<reference key="1">
    <citation type="submission" date="2007-04" db="EMBL/GenBank/DDBJ databases">
        <title>Complete sequence of chromosome of Rhodobacter sphaeroides ATCC 17025.</title>
        <authorList>
            <consortium name="US DOE Joint Genome Institute"/>
            <person name="Copeland A."/>
            <person name="Lucas S."/>
            <person name="Lapidus A."/>
            <person name="Barry K."/>
            <person name="Detter J.C."/>
            <person name="Glavina del Rio T."/>
            <person name="Hammon N."/>
            <person name="Israni S."/>
            <person name="Dalin E."/>
            <person name="Tice H."/>
            <person name="Pitluck S."/>
            <person name="Chertkov O."/>
            <person name="Brettin T."/>
            <person name="Bruce D."/>
            <person name="Han C."/>
            <person name="Schmutz J."/>
            <person name="Larimer F."/>
            <person name="Land M."/>
            <person name="Hauser L."/>
            <person name="Kyrpides N."/>
            <person name="Kim E."/>
            <person name="Richardson P."/>
            <person name="Mackenzie C."/>
            <person name="Choudhary M."/>
            <person name="Donohue T.J."/>
            <person name="Kaplan S."/>
        </authorList>
    </citation>
    <scope>NUCLEOTIDE SEQUENCE [LARGE SCALE GENOMIC DNA]</scope>
    <source>
        <strain>ATCC 17025 / ATH 2.4.3</strain>
    </source>
</reference>
<sequence>MDRCGAYLDTMRSTAPLVQCITNFVAMNVMANVLLAAGASPAMVHDAEESGEFAAIAQVLTINLGTPSPRWVEGMEAAARGAVAAGRPWVLDPVAVGATAFRRGLGARLLALKPTVIRGNASEILALAGAEARGKGADSADTVAAAEAAAQRLAEGSGAVVAVTGPVDFVTDGRRGIRCGNGHALMPKVTALGCSLTGIVGAFAAGQPAFEATAAGLAFFGLAGEEAARRAAGPGSFQVAFLDALHAMTPDDLDRGAKLEAA</sequence>
<accession>A4WQ25</accession>
<protein>
    <recommendedName>
        <fullName evidence="1">Hydroxyethylthiazole kinase</fullName>
        <ecNumber evidence="1">2.7.1.50</ecNumber>
    </recommendedName>
    <alternativeName>
        <fullName evidence="1">4-methyl-5-beta-hydroxyethylthiazole kinase</fullName>
        <shortName evidence="1">TH kinase</shortName>
        <shortName evidence="1">Thz kinase</shortName>
    </alternativeName>
</protein>
<gene>
    <name evidence="1" type="primary">thiM</name>
    <name type="ordered locus">Rsph17025_0583</name>
</gene>
<organism>
    <name type="scientific">Cereibacter sphaeroides (strain ATCC 17025 / ATH 2.4.3)</name>
    <name type="common">Rhodobacter sphaeroides</name>
    <dbReference type="NCBI Taxonomy" id="349102"/>
    <lineage>
        <taxon>Bacteria</taxon>
        <taxon>Pseudomonadati</taxon>
        <taxon>Pseudomonadota</taxon>
        <taxon>Alphaproteobacteria</taxon>
        <taxon>Rhodobacterales</taxon>
        <taxon>Paracoccaceae</taxon>
        <taxon>Cereibacter</taxon>
    </lineage>
</organism>
<proteinExistence type="inferred from homology"/>